<dbReference type="EC" id="2.8.2.1" evidence="1"/>
<dbReference type="EMBL" id="AC106782">
    <property type="status" value="NOT_ANNOTATED_CDS"/>
    <property type="molecule type" value="Genomic_DNA"/>
</dbReference>
<dbReference type="EMBL" id="AC133555">
    <property type="status" value="NOT_ANNOTATED_CDS"/>
    <property type="molecule type" value="Genomic_DNA"/>
</dbReference>
<dbReference type="CCDS" id="CCDS32427.1"/>
<dbReference type="RefSeq" id="NP_001017390.1">
    <property type="nucleotide sequence ID" value="NM_001017390.3"/>
</dbReference>
<dbReference type="RefSeq" id="XP_016855108.1">
    <property type="nucleotide sequence ID" value="XM_016999619.1"/>
</dbReference>
<dbReference type="SMR" id="P0DMN0"/>
<dbReference type="BioGRID" id="112687">
    <property type="interactions" value="31"/>
</dbReference>
<dbReference type="BioGRID" id="138644">
    <property type="interactions" value="13"/>
</dbReference>
<dbReference type="FunCoup" id="P0DMN0">
    <property type="interactions" value="179"/>
</dbReference>
<dbReference type="IntAct" id="P0DMN0">
    <property type="interactions" value="15"/>
</dbReference>
<dbReference type="MINT" id="P0DMN0"/>
<dbReference type="DrugBank" id="DB12243">
    <property type="generic name" value="Edaravone"/>
</dbReference>
<dbReference type="DrugBank" id="DB12471">
    <property type="generic name" value="Ibrexafungerp"/>
</dbReference>
<dbReference type="DrugBank" id="DB00968">
    <property type="generic name" value="Methyldopa"/>
</dbReference>
<dbReference type="DrugBank" id="DB00960">
    <property type="generic name" value="Pindolol"/>
</dbReference>
<dbReference type="DrugBank" id="DB00867">
    <property type="generic name" value="Ritodrine"/>
</dbReference>
<dbReference type="DrugBank" id="DB00871">
    <property type="generic name" value="Terbutaline"/>
</dbReference>
<dbReference type="GlyGen" id="P0DMN0">
    <property type="glycosylation" value="1 site, 1 O-linked glycan (1 site)"/>
</dbReference>
<dbReference type="iPTMnet" id="P0DMN0"/>
<dbReference type="PhosphoSitePlus" id="P0DMN0"/>
<dbReference type="BioMuta" id="SULT1A4"/>
<dbReference type="jPOST" id="P0DMN0"/>
<dbReference type="MassIVE" id="P0DMN0"/>
<dbReference type="Pumba" id="P0DMN0"/>
<dbReference type="Antibodypedia" id="26725">
    <property type="antibodies" value="61 antibodies from 19 providers"/>
</dbReference>
<dbReference type="DNASU" id="6818"/>
<dbReference type="Ensembl" id="ENST00000360423.12">
    <property type="protein sequence ID" value="ENSP00000353600.8"/>
    <property type="gene ID" value="ENSG00000213648.11"/>
</dbReference>
<dbReference type="GeneID" id="445329"/>
<dbReference type="KEGG" id="hsa:445329"/>
<dbReference type="KEGG" id="hsa:6818"/>
<dbReference type="MANE-Select" id="ENST00000360423.12">
    <property type="protein sequence ID" value="ENSP00000353600.8"/>
    <property type="RefSeq nucleotide sequence ID" value="NM_001017390.3"/>
    <property type="RefSeq protein sequence ID" value="NP_001017390.1"/>
</dbReference>
<dbReference type="AGR" id="HGNC:11455"/>
<dbReference type="AGR" id="HGNC:30004"/>
<dbReference type="CTD" id="445329"/>
<dbReference type="CTD" id="6818"/>
<dbReference type="DisGeNET" id="445329"/>
<dbReference type="DisGeNET" id="6818"/>
<dbReference type="GeneCards" id="SULT1A4"/>
<dbReference type="HGNC" id="HGNC:30004">
    <property type="gene designation" value="SULT1A4"/>
</dbReference>
<dbReference type="HPA" id="ENSG00000213648">
    <property type="expression patterns" value="Tissue enhanced (intestine)"/>
</dbReference>
<dbReference type="MIM" id="615819">
    <property type="type" value="gene"/>
</dbReference>
<dbReference type="neXtProt" id="NX_P0DMN0"/>
<dbReference type="OpenTargets" id="ENSG00000261052"/>
<dbReference type="VEuPathDB" id="HostDB:ENSG00000213648"/>
<dbReference type="GeneTree" id="ENSGT00940000164316"/>
<dbReference type="HOGENOM" id="CLU_027239_1_2_1"/>
<dbReference type="InParanoid" id="P0DMN0"/>
<dbReference type="OMA" id="IRERNIF"/>
<dbReference type="OrthoDB" id="9519140at2759"/>
<dbReference type="PAN-GO" id="P0DMN0">
    <property type="GO annotations" value="3 GO annotations based on evolutionary models"/>
</dbReference>
<dbReference type="PhylomeDB" id="P0DMN0"/>
<dbReference type="BRENDA" id="2.8.2.1">
    <property type="organism ID" value="2681"/>
</dbReference>
<dbReference type="PathwayCommons" id="P0DMN0"/>
<dbReference type="Reactome" id="R-HSA-156584">
    <property type="pathway name" value="Cytosolic sulfonation of small molecules"/>
</dbReference>
<dbReference type="Reactome" id="R-HSA-9753281">
    <property type="pathway name" value="Paracetamol ADME"/>
</dbReference>
<dbReference type="BioGRID-ORCS" id="445329">
    <property type="hits" value="18 hits in 631 CRISPR screens"/>
</dbReference>
<dbReference type="BioGRID-ORCS" id="6818">
    <property type="hits" value="19 hits in 323 CRISPR screens"/>
</dbReference>
<dbReference type="Pharos" id="P0DMN0">
    <property type="development level" value="Tdark"/>
</dbReference>
<dbReference type="PRO" id="PR:P0DMN0"/>
<dbReference type="Proteomes" id="UP000005640">
    <property type="component" value="Chromosome 16"/>
</dbReference>
<dbReference type="RNAct" id="P0DMN0">
    <property type="molecule type" value="protein"/>
</dbReference>
<dbReference type="Bgee" id="ENSG00000213648">
    <property type="expression patterns" value="Expressed in mucosa of transverse colon and 98 other cell types or tissues"/>
</dbReference>
<dbReference type="ExpressionAtlas" id="P0DMN0">
    <property type="expression patterns" value="baseline"/>
</dbReference>
<dbReference type="GO" id="GO:0005737">
    <property type="term" value="C:cytoplasm"/>
    <property type="evidence" value="ECO:0000318"/>
    <property type="project" value="GO_Central"/>
</dbReference>
<dbReference type="GO" id="GO:0005829">
    <property type="term" value="C:cytosol"/>
    <property type="evidence" value="ECO:0000304"/>
    <property type="project" value="Reactome"/>
</dbReference>
<dbReference type="GO" id="GO:0004062">
    <property type="term" value="F:aryl sulfotransferase activity"/>
    <property type="evidence" value="ECO:0000318"/>
    <property type="project" value="GO_Central"/>
</dbReference>
<dbReference type="GO" id="GO:0008146">
    <property type="term" value="F:sulfotransferase activity"/>
    <property type="evidence" value="ECO:0000314"/>
    <property type="project" value="UniProtKB"/>
</dbReference>
<dbReference type="GO" id="GO:0042417">
    <property type="term" value="P:dopamine metabolic process"/>
    <property type="evidence" value="ECO:0000314"/>
    <property type="project" value="UniProtKB"/>
</dbReference>
<dbReference type="GO" id="GO:0042414">
    <property type="term" value="P:epinephrine metabolic process"/>
    <property type="evidence" value="ECO:0000314"/>
    <property type="project" value="UniProtKB"/>
</dbReference>
<dbReference type="GO" id="GO:0042415">
    <property type="term" value="P:norepinephrine metabolic process"/>
    <property type="evidence" value="ECO:0000314"/>
    <property type="project" value="UniProtKB"/>
</dbReference>
<dbReference type="GO" id="GO:0042428">
    <property type="term" value="P:serotonin metabolic process"/>
    <property type="evidence" value="ECO:0000314"/>
    <property type="project" value="UniProtKB"/>
</dbReference>
<dbReference type="GO" id="GO:0008202">
    <property type="term" value="P:steroid metabolic process"/>
    <property type="evidence" value="ECO:0007669"/>
    <property type="project" value="UniProtKB-KW"/>
</dbReference>
<dbReference type="GO" id="GO:0051923">
    <property type="term" value="P:sulfation"/>
    <property type="evidence" value="ECO:0000314"/>
    <property type="project" value="UniProtKB"/>
</dbReference>
<dbReference type="GO" id="GO:0042403">
    <property type="term" value="P:thyroid hormone metabolic process"/>
    <property type="evidence" value="ECO:0000314"/>
    <property type="project" value="UniProtKB"/>
</dbReference>
<dbReference type="FunFam" id="3.40.50.300:FF:000433">
    <property type="entry name" value="Estrogen sulfotransferase"/>
    <property type="match status" value="1"/>
</dbReference>
<dbReference type="Gene3D" id="3.40.50.300">
    <property type="entry name" value="P-loop containing nucleotide triphosphate hydrolases"/>
    <property type="match status" value="1"/>
</dbReference>
<dbReference type="InterPro" id="IPR027417">
    <property type="entry name" value="P-loop_NTPase"/>
</dbReference>
<dbReference type="InterPro" id="IPR000863">
    <property type="entry name" value="Sulfotransferase_dom"/>
</dbReference>
<dbReference type="PANTHER" id="PTHR11783">
    <property type="entry name" value="SULFOTRANSFERASE SULT"/>
    <property type="match status" value="1"/>
</dbReference>
<dbReference type="Pfam" id="PF00685">
    <property type="entry name" value="Sulfotransfer_1"/>
    <property type="match status" value="1"/>
</dbReference>
<dbReference type="SUPFAM" id="SSF52540">
    <property type="entry name" value="P-loop containing nucleoside triphosphate hydrolases"/>
    <property type="match status" value="1"/>
</dbReference>
<proteinExistence type="evidence at protein level"/>
<keyword id="KW-0128">Catecholamine metabolism</keyword>
<keyword id="KW-0963">Cytoplasm</keyword>
<keyword id="KW-0443">Lipid metabolism</keyword>
<keyword id="KW-1185">Reference proteome</keyword>
<keyword id="KW-0753">Steroid metabolism</keyword>
<keyword id="KW-0808">Transferase</keyword>
<accession>P0DMN0</accession>
<accession>B4DNV0</accession>
<accession>O95603</accession>
<accession>P50224</accession>
<accession>Q1ET66</accession>
<accession>Q6ZWJ5</accession>
<organism>
    <name type="scientific">Homo sapiens</name>
    <name type="common">Human</name>
    <dbReference type="NCBI Taxonomy" id="9606"/>
    <lineage>
        <taxon>Eukaryota</taxon>
        <taxon>Metazoa</taxon>
        <taxon>Chordata</taxon>
        <taxon>Craniata</taxon>
        <taxon>Vertebrata</taxon>
        <taxon>Euteleostomi</taxon>
        <taxon>Mammalia</taxon>
        <taxon>Eutheria</taxon>
        <taxon>Euarchontoglires</taxon>
        <taxon>Primates</taxon>
        <taxon>Haplorrhini</taxon>
        <taxon>Catarrhini</taxon>
        <taxon>Hominidae</taxon>
        <taxon>Homo</taxon>
    </lineage>
</organism>
<name>ST1A4_HUMAN</name>
<reference key="1">
    <citation type="journal article" date="2004" name="Nature">
        <title>The sequence and analysis of duplication-rich human chromosome 16.</title>
        <authorList>
            <person name="Martin J."/>
            <person name="Han C."/>
            <person name="Gordon L.A."/>
            <person name="Terry A."/>
            <person name="Prabhakar S."/>
            <person name="She X."/>
            <person name="Xie G."/>
            <person name="Hellsten U."/>
            <person name="Chan Y.M."/>
            <person name="Altherr M."/>
            <person name="Couronne O."/>
            <person name="Aerts A."/>
            <person name="Bajorek E."/>
            <person name="Black S."/>
            <person name="Blumer H."/>
            <person name="Branscomb E."/>
            <person name="Brown N.C."/>
            <person name="Bruno W.J."/>
            <person name="Buckingham J.M."/>
            <person name="Callen D.F."/>
            <person name="Campbell C.S."/>
            <person name="Campbell M.L."/>
            <person name="Campbell E.W."/>
            <person name="Caoile C."/>
            <person name="Challacombe J.F."/>
            <person name="Chasteen L.A."/>
            <person name="Chertkov O."/>
            <person name="Chi H.C."/>
            <person name="Christensen M."/>
            <person name="Clark L.M."/>
            <person name="Cohn J.D."/>
            <person name="Denys M."/>
            <person name="Detter J.C."/>
            <person name="Dickson M."/>
            <person name="Dimitrijevic-Bussod M."/>
            <person name="Escobar J."/>
            <person name="Fawcett J.J."/>
            <person name="Flowers D."/>
            <person name="Fotopulos D."/>
            <person name="Glavina T."/>
            <person name="Gomez M."/>
            <person name="Gonzales E."/>
            <person name="Goodstein D."/>
            <person name="Goodwin L.A."/>
            <person name="Grady D.L."/>
            <person name="Grigoriev I."/>
            <person name="Groza M."/>
            <person name="Hammon N."/>
            <person name="Hawkins T."/>
            <person name="Haydu L."/>
            <person name="Hildebrand C.E."/>
            <person name="Huang W."/>
            <person name="Israni S."/>
            <person name="Jett J."/>
            <person name="Jewett P.B."/>
            <person name="Kadner K."/>
            <person name="Kimball H."/>
            <person name="Kobayashi A."/>
            <person name="Krawczyk M.-C."/>
            <person name="Leyba T."/>
            <person name="Longmire J.L."/>
            <person name="Lopez F."/>
            <person name="Lou Y."/>
            <person name="Lowry S."/>
            <person name="Ludeman T."/>
            <person name="Manohar C.F."/>
            <person name="Mark G.A."/>
            <person name="McMurray K.L."/>
            <person name="Meincke L.J."/>
            <person name="Morgan J."/>
            <person name="Moyzis R.K."/>
            <person name="Mundt M.O."/>
            <person name="Munk A.C."/>
            <person name="Nandkeshwar R.D."/>
            <person name="Pitluck S."/>
            <person name="Pollard M."/>
            <person name="Predki P."/>
            <person name="Parson-Quintana B."/>
            <person name="Ramirez L."/>
            <person name="Rash S."/>
            <person name="Retterer J."/>
            <person name="Ricke D.O."/>
            <person name="Robinson D.L."/>
            <person name="Rodriguez A."/>
            <person name="Salamov A."/>
            <person name="Saunders E.H."/>
            <person name="Scott D."/>
            <person name="Shough T."/>
            <person name="Stallings R.L."/>
            <person name="Stalvey M."/>
            <person name="Sutherland R.D."/>
            <person name="Tapia R."/>
            <person name="Tesmer J.G."/>
            <person name="Thayer N."/>
            <person name="Thompson L.S."/>
            <person name="Tice H."/>
            <person name="Torney D.C."/>
            <person name="Tran-Gyamfi M."/>
            <person name="Tsai M."/>
            <person name="Ulanovsky L.E."/>
            <person name="Ustaszewska A."/>
            <person name="Vo N."/>
            <person name="White P.S."/>
            <person name="Williams A.L."/>
            <person name="Wills P.L."/>
            <person name="Wu J.-R."/>
            <person name="Wu K."/>
            <person name="Yang J."/>
            <person name="DeJong P."/>
            <person name="Bruce D."/>
            <person name="Doggett N.A."/>
            <person name="Deaven L."/>
            <person name="Schmutz J."/>
            <person name="Grimwood J."/>
            <person name="Richardson P."/>
            <person name="Rokhsar D.S."/>
            <person name="Eichler E.E."/>
            <person name="Gilna P."/>
            <person name="Lucas S.M."/>
            <person name="Myers R.M."/>
            <person name="Rubin E.M."/>
            <person name="Pennacchio L.A."/>
        </authorList>
    </citation>
    <scope>NUCLEOTIDE SEQUENCE [LARGE SCALE GENOMIC DNA]</scope>
</reference>
<reference key="2">
    <citation type="journal article" date="1999" name="J. Clin. Endocrinol. Metab.">
        <title>Characterization of human iodothyronine sulfotransferases.</title>
        <authorList>
            <person name="Kester M.H."/>
            <person name="Kaptein E."/>
            <person name="Roest T.J."/>
            <person name="van Dijk C.H."/>
            <person name="Tibboel D."/>
            <person name="Meinl W."/>
            <person name="Glatt H."/>
            <person name="Coughtrie M.W."/>
            <person name="Visser T.J."/>
        </authorList>
    </citation>
    <scope>FUNCTION</scope>
    <scope>CATALYTIC ACTIVITY</scope>
    <scope>BIOPHYSICOCHEMICAL PROPERTIES</scope>
</reference>
<reference key="3">
    <citation type="journal article" date="2011" name="BMC Syst. Biol.">
        <title>Initial characterization of the human central proteome.</title>
        <authorList>
            <person name="Burkard T.R."/>
            <person name="Planyavsky M."/>
            <person name="Kaupe I."/>
            <person name="Breitwieser F.P."/>
            <person name="Buerckstuemmer T."/>
            <person name="Bennett K.L."/>
            <person name="Superti-Furga G."/>
            <person name="Colinge J."/>
        </authorList>
    </citation>
    <scope>IDENTIFICATION BY MASS SPECTROMETRY [LARGE SCALE ANALYSIS]</scope>
</reference>
<reference key="4">
    <citation type="journal article" date="2004" name="Biochem. Biophys. Res. Commun.">
        <title>Human SULT1A3 pharmacogenetics: gene duplication and functional genomic studies.</title>
        <authorList>
            <person name="Hildebrandt M.A.T."/>
            <person name="Salavaggione O.E."/>
            <person name="Martin Y.N."/>
            <person name="Flynn H.C."/>
            <person name="Jalal S."/>
            <person name="Wieben E.D."/>
            <person name="Weinshilboum R.M."/>
        </authorList>
    </citation>
    <scope>FUNCTION</scope>
    <scope>CATALYTIC ACTIVITY</scope>
    <scope>BIOPHYSICOCHEMICAL PROPERTIES</scope>
    <scope>CAUTION</scope>
</reference>
<reference key="5">
    <citation type="journal article" date="2018" name="Biochem. Pharmacol.">
        <title>Sulfation of catecholamines and serotonin by SULT1A3 allozymes.</title>
        <authorList>
            <person name="Bairam A.F."/>
            <person name="Rasool M.I."/>
            <person name="Alherz F.A."/>
            <person name="Abunnaja M.S."/>
            <person name="El Daibani A.A."/>
            <person name="Gohal S.A."/>
            <person name="Kurogi K."/>
            <person name="Sakakibara Y."/>
            <person name="Suiko M."/>
            <person name="Liu M.C."/>
        </authorList>
    </citation>
    <scope>FUNCTION</scope>
    <scope>CATALYTIC ACTIVITY</scope>
    <scope>BIOPHYSICOCHEMICAL PROPERTIES</scope>
</reference>
<evidence type="ECO:0000250" key="1">
    <source>
        <dbReference type="UniProtKB" id="P0DMM9"/>
    </source>
</evidence>
<evidence type="ECO:0000269" key="2">
    <source>
    </source>
</evidence>
<evidence type="ECO:0000269" key="3">
    <source>
    </source>
</evidence>
<evidence type="ECO:0000269" key="4">
    <source>
    </source>
</evidence>
<evidence type="ECO:0000305" key="5"/>
<evidence type="ECO:0000305" key="6">
    <source>
    </source>
</evidence>
<evidence type="ECO:0000305" key="7">
    <source>
    </source>
</evidence>
<evidence type="ECO:0000305" key="8">
    <source>
    </source>
</evidence>
<sequence length="295" mass="34196">MELIQDTSRPPLEYVKGVPLIKYFAEALGPLQSFQARPDDLLINTYPKSGTTWVSQILDMIYQGGDLEKCNRAPIYVRVPFLEVNDPGEPSGLETLKDTPPPRLIKSHLPLALLPQTLLDQKVKVVYVARNPKDVAVSYYHFHRMEKAHPEPGTWDSFLEKFMAGEVSYGSWYQHVQEWWELSRTHPVLYLFYEDMKENPKREIQKILEFVGRSLPEETMDFMVQHTSFKEMKKNPMTNYTTVPQELMDHSISPFMRKGMAGDWKTTFTVAQNERFDADYAEKMAGCSLSFRSEL</sequence>
<feature type="chain" id="PRO_0000430204" description="Sulfotransferase 1A4">
    <location>
        <begin position="1"/>
        <end position="295"/>
    </location>
</feature>
<feature type="active site" description="Proton acceptor" evidence="1">
    <location>
        <position position="108"/>
    </location>
</feature>
<feature type="binding site" evidence="1">
    <location>
        <begin position="48"/>
        <end position="53"/>
    </location>
    <ligand>
        <name>3'-phosphoadenylyl sulfate</name>
        <dbReference type="ChEBI" id="CHEBI:58339"/>
    </ligand>
</feature>
<feature type="binding site" evidence="1">
    <location>
        <position position="86"/>
    </location>
    <ligand>
        <name>dopamine</name>
        <dbReference type="ChEBI" id="CHEBI:59905"/>
    </ligand>
</feature>
<feature type="binding site" evidence="1">
    <location>
        <begin position="106"/>
        <end position="108"/>
    </location>
    <ligand>
        <name>dopamine</name>
        <dbReference type="ChEBI" id="CHEBI:59905"/>
    </ligand>
</feature>
<feature type="binding site" evidence="1">
    <location>
        <position position="130"/>
    </location>
    <ligand>
        <name>3'-phosphoadenylyl sulfate</name>
        <dbReference type="ChEBI" id="CHEBI:58339"/>
    </ligand>
</feature>
<feature type="binding site" evidence="1">
    <location>
        <position position="138"/>
    </location>
    <ligand>
        <name>3'-phosphoadenylyl sulfate</name>
        <dbReference type="ChEBI" id="CHEBI:58339"/>
    </ligand>
</feature>
<feature type="binding site" evidence="1">
    <location>
        <position position="146"/>
    </location>
    <ligand>
        <name>dopamine</name>
        <dbReference type="ChEBI" id="CHEBI:59905"/>
    </ligand>
</feature>
<feature type="binding site" evidence="1">
    <location>
        <position position="193"/>
    </location>
    <ligand>
        <name>3'-phosphoadenylyl sulfate</name>
        <dbReference type="ChEBI" id="CHEBI:58339"/>
    </ligand>
</feature>
<feature type="binding site" evidence="1">
    <location>
        <begin position="227"/>
        <end position="232"/>
    </location>
    <ligand>
        <name>3'-phosphoadenylyl sulfate</name>
        <dbReference type="ChEBI" id="CHEBI:58339"/>
    </ligand>
</feature>
<feature type="binding site" evidence="1">
    <location>
        <begin position="257"/>
        <end position="259"/>
    </location>
    <ligand>
        <name>3'-phosphoadenylyl sulfate</name>
        <dbReference type="ChEBI" id="CHEBI:58339"/>
    </ligand>
</feature>
<gene>
    <name type="primary">SULT1A4</name>
</gene>
<comment type="function">
    <text evidence="2 3 4">Sulfotransferase that utilizes 3'-phospho-5'-adenylyl sulfate (PAPS) as sulfonate donor to catalyze the sulfate conjugation of phenolic monoamines (neurotransmitters such as dopamine, (R)-adrenaline/epinephrine, (R)-noradrenaline/norepinephrine and serotonin) and phenolic and catechol drugs (PubMed:15358107, PubMed:29524394). Catalyzes the sulfation of T4 (L-thyroxine/3,5,3',5'-tetraiodothyronine), T3 (3,5,3'-triiodothyronine), rT3 (3,3',5'-triiodothyronine) and 3,3'-T2 (3,3'-diiodothyronine), with a substrate preference of 3,3'-T2 &gt; rT3 &gt; T3 &gt; T4 (PubMed:10199779).</text>
</comment>
<comment type="catalytic activity">
    <reaction evidence="1">
        <text>a phenol + 3'-phosphoadenylyl sulfate = an aryl sulfate + adenosine 3',5'-bisphosphate + H(+)</text>
        <dbReference type="Rhea" id="RHEA:12164"/>
        <dbReference type="ChEBI" id="CHEBI:15378"/>
        <dbReference type="ChEBI" id="CHEBI:33853"/>
        <dbReference type="ChEBI" id="CHEBI:58339"/>
        <dbReference type="ChEBI" id="CHEBI:58343"/>
        <dbReference type="ChEBI" id="CHEBI:140317"/>
        <dbReference type="EC" id="2.8.2.1"/>
    </reaction>
    <physiologicalReaction direction="left-to-right" evidence="1">
        <dbReference type="Rhea" id="RHEA:12165"/>
    </physiologicalReaction>
</comment>
<comment type="catalytic activity">
    <reaction evidence="1">
        <text>4-nitrophenol + 3'-phosphoadenylyl sulfate = 4-nitrophenyl sulfate + adenosine 3',5'-bisphosphate</text>
        <dbReference type="Rhea" id="RHEA:66548"/>
        <dbReference type="ChEBI" id="CHEBI:57917"/>
        <dbReference type="ChEBI" id="CHEBI:58339"/>
        <dbReference type="ChEBI" id="CHEBI:58343"/>
        <dbReference type="ChEBI" id="CHEBI:140994"/>
    </reaction>
    <physiologicalReaction direction="left-to-right" evidence="1">
        <dbReference type="Rhea" id="RHEA:66549"/>
    </physiologicalReaction>
</comment>
<comment type="catalytic activity">
    <reaction evidence="3 4">
        <text>dopamine + 3'-phosphoadenylyl sulfate = dopamine 3-O-sulfate + adenosine 3',5'-bisphosphate + H(+)</text>
        <dbReference type="Rhea" id="RHEA:67880"/>
        <dbReference type="ChEBI" id="CHEBI:15378"/>
        <dbReference type="ChEBI" id="CHEBI:58339"/>
        <dbReference type="ChEBI" id="CHEBI:58343"/>
        <dbReference type="ChEBI" id="CHEBI:59905"/>
        <dbReference type="ChEBI" id="CHEBI:133524"/>
    </reaction>
    <physiologicalReaction direction="left-to-right" evidence="7">
        <dbReference type="Rhea" id="RHEA:67881"/>
    </physiologicalReaction>
</comment>
<comment type="catalytic activity">
    <reaction evidence="3 4">
        <text>dopamine + 3'-phosphoadenylyl sulfate = dopamine 4-O-sulfate + adenosine 3',5'-bisphosphate + H(+)</text>
        <dbReference type="Rhea" id="RHEA:67884"/>
        <dbReference type="ChEBI" id="CHEBI:15378"/>
        <dbReference type="ChEBI" id="CHEBI:58339"/>
        <dbReference type="ChEBI" id="CHEBI:58343"/>
        <dbReference type="ChEBI" id="CHEBI:59905"/>
        <dbReference type="ChEBI" id="CHEBI:133529"/>
    </reaction>
    <physiologicalReaction direction="left-to-right" evidence="7">
        <dbReference type="Rhea" id="RHEA:67885"/>
    </physiologicalReaction>
</comment>
<comment type="catalytic activity">
    <reaction evidence="4">
        <text>serotonin + 3'-phosphoadenylyl sulfate = serotonin O-sulfate + adenosine 3',5'-bisphosphate + H(+)</text>
        <dbReference type="Rhea" id="RHEA:83339"/>
        <dbReference type="ChEBI" id="CHEBI:15378"/>
        <dbReference type="ChEBI" id="CHEBI:58339"/>
        <dbReference type="ChEBI" id="CHEBI:58343"/>
        <dbReference type="ChEBI" id="CHEBI:233042"/>
        <dbReference type="ChEBI" id="CHEBI:350546"/>
    </reaction>
    <physiologicalReaction direction="left-to-right" evidence="8">
        <dbReference type="Rhea" id="RHEA:83340"/>
    </physiologicalReaction>
</comment>
<comment type="catalytic activity">
    <reaction evidence="4">
        <text>(R)-adrenaline + 3'-phosphoadenylyl sulfate = (R)-adrenaline 4'-O-sulfate + adenosine 3',5'-bisphosphate + H(+)</text>
        <dbReference type="Rhea" id="RHEA:83343"/>
        <dbReference type="ChEBI" id="CHEBI:15378"/>
        <dbReference type="ChEBI" id="CHEBI:58339"/>
        <dbReference type="ChEBI" id="CHEBI:58343"/>
        <dbReference type="ChEBI" id="CHEBI:71406"/>
        <dbReference type="ChEBI" id="CHEBI:233043"/>
    </reaction>
    <physiologicalReaction direction="left-to-right" evidence="8">
        <dbReference type="Rhea" id="RHEA:83344"/>
    </physiologicalReaction>
</comment>
<comment type="catalytic activity">
    <reaction evidence="4">
        <text>(R)-noradrenaline + 3'-phosphoadenylyl sulfate = (R)-noradrenaline 4'-O-sulfate + adenosine 3',5'-bisphosphate + H(+)</text>
        <dbReference type="Rhea" id="RHEA:83351"/>
        <dbReference type="ChEBI" id="CHEBI:15378"/>
        <dbReference type="ChEBI" id="CHEBI:58339"/>
        <dbReference type="ChEBI" id="CHEBI:58343"/>
        <dbReference type="ChEBI" id="CHEBI:72587"/>
        <dbReference type="ChEBI" id="CHEBI:233044"/>
    </reaction>
    <physiologicalReaction direction="left-to-right" evidence="8">
        <dbReference type="Rhea" id="RHEA:83352"/>
    </physiologicalReaction>
</comment>
<comment type="catalytic activity">
    <reaction evidence="2">
        <text>3,3',5-triiodo-L-thyronine + 3'-phosphoadenylyl sulfate = 3,3',5-triiodo-L-thyronine sulfate + adenosine 3',5'-bisphosphate + H(+)</text>
        <dbReference type="Rhea" id="RHEA:67876"/>
        <dbReference type="ChEBI" id="CHEBI:15378"/>
        <dbReference type="ChEBI" id="CHEBI:58339"/>
        <dbReference type="ChEBI" id="CHEBI:58343"/>
        <dbReference type="ChEBI" id="CHEBI:176511"/>
        <dbReference type="ChEBI" id="CHEBI:533015"/>
    </reaction>
    <physiologicalReaction direction="left-to-right" evidence="6">
        <dbReference type="Rhea" id="RHEA:67877"/>
    </physiologicalReaction>
</comment>
<comment type="catalytic activity">
    <reaction evidence="2">
        <text>3,3',5'-triiodo-L-thyronine + 3'-phosphoadenylyl sulfate = 3,3',5'-triiodo-L-thyronine sulfate + adenosine 3',5'-bisphosphate + H(+)</text>
        <dbReference type="Rhea" id="RHEA:67888"/>
        <dbReference type="ChEBI" id="CHEBI:15378"/>
        <dbReference type="ChEBI" id="CHEBI:57261"/>
        <dbReference type="ChEBI" id="CHEBI:58339"/>
        <dbReference type="ChEBI" id="CHEBI:58343"/>
        <dbReference type="ChEBI" id="CHEBI:176513"/>
    </reaction>
    <physiologicalReaction direction="left-to-right" evidence="6">
        <dbReference type="Rhea" id="RHEA:67889"/>
    </physiologicalReaction>
</comment>
<comment type="catalytic activity">
    <reaction evidence="2">
        <text>3,3'-diiodo-L-thyronine + 3'-phosphoadenylyl sulfate = 3,3'-diiodo-L-thyronine sulfate + adenosine 3',5'-bisphosphate + H(+)</text>
        <dbReference type="Rhea" id="RHEA:67892"/>
        <dbReference type="ChEBI" id="CHEBI:15378"/>
        <dbReference type="ChEBI" id="CHEBI:58339"/>
        <dbReference type="ChEBI" id="CHEBI:58343"/>
        <dbReference type="ChEBI" id="CHEBI:176514"/>
        <dbReference type="ChEBI" id="CHEBI:176515"/>
    </reaction>
    <physiologicalReaction direction="left-to-right" evidence="6">
        <dbReference type="Rhea" id="RHEA:67893"/>
    </physiologicalReaction>
</comment>
<comment type="catalytic activity">
    <reaction evidence="2">
        <text>L-thyroxine + 3'-phosphoadenylyl sulfate = L-thyroxine sulfate + adenosine 3',5'-bisphosphate + H(+)</text>
        <dbReference type="Rhea" id="RHEA:83575"/>
        <dbReference type="ChEBI" id="CHEBI:15378"/>
        <dbReference type="ChEBI" id="CHEBI:58339"/>
        <dbReference type="ChEBI" id="CHEBI:58343"/>
        <dbReference type="ChEBI" id="CHEBI:58448"/>
        <dbReference type="ChEBI" id="CHEBI:176512"/>
    </reaction>
    <physiologicalReaction direction="left-to-right" evidence="6">
        <dbReference type="Rhea" id="RHEA:83576"/>
    </physiologicalReaction>
</comment>
<comment type="biophysicochemical properties">
    <kinetics>
        <KM evidence="3">8.3 uM for dopamine</KM>
        <KM evidence="3">0.19 uM for 3'-phosphoadenylyl sulfate</KM>
        <KM evidence="4">6.46 uM for dopamine</KM>
        <KM evidence="4">9.16 uM for (R)-adrenaline</KM>
        <KM evidence="4">10.65 uM for (R)-noradrenaline</KM>
        <KM evidence="4">71.38 uM for serotonin</KM>
        <KM evidence="2">31.2 uM for 3,3'-diiodothyronine</KM>
        <KM evidence="2">112 uM for 3,5,3'-triiodothyronine</KM>
        <KM evidence="2">2.7 uM for 3'-phosphoadenylyl sulfate</KM>
        <Vmax evidence="4">40.82 nmol/min/mg enzyme towards dopamine</Vmax>
        <Vmax evidence="4">35.3 nmol/min/mg enzyme towards (R)-adrenaline</Vmax>
        <Vmax evidence="4">42.53 nmol/min/mg enzyme towards (R)-noradrenaline</Vmax>
        <Vmax evidence="4">38.99 nmol/min/mg enzyme towards serotonin</Vmax>
        <Vmax evidence="2">782.0 umol/min/mg enzyme towards 3,3'-diiodothyronine</Vmax>
        <Vmax evidence="2">158.0 umol/min/mg enzyme towards 3,5,3'-triiodothyronine</Vmax>
        <Vmax evidence="2">4.9 umol/min/mg enzyme towards 3'-phosphoadenylyl sulfate</Vmax>
    </kinetics>
</comment>
<comment type="subunit">
    <text evidence="1">Homodimer.</text>
</comment>
<comment type="interaction">
    <interactant intactId="EBI-10196922">
        <id>P0DMN0</id>
    </interactant>
    <interactant intactId="EBI-742808">
        <id>Q5VWX1</id>
        <label>KHDRBS2</label>
    </interactant>
    <organismsDiffer>false</organismsDiffer>
    <experiments>3</experiments>
</comment>
<comment type="interaction">
    <interactant intactId="EBI-10196922">
        <id>P0DMN0</id>
    </interactant>
    <interactant intactId="EBI-740897">
        <id>Q9GZT8</id>
        <label>NIF3L1</label>
    </interactant>
    <organismsDiffer>false</organismsDiffer>
    <experiments>3</experiments>
</comment>
<comment type="interaction">
    <interactant intactId="EBI-10196922">
        <id>P0DMN0</id>
    </interactant>
    <interactant intactId="EBI-715117">
        <id>P34896</id>
        <label>SHMT1</label>
    </interactant>
    <organismsDiffer>false</organismsDiffer>
    <experiments>3</experiments>
</comment>
<comment type="subcellular location">
    <subcellularLocation>
        <location evidence="1">Cytoplasm</location>
    </subcellularLocation>
</comment>
<comment type="PTM">
    <text>The N-terminus is blocked.</text>
</comment>
<comment type="similarity">
    <text evidence="5">Belongs to the sulfotransferase 1 family.</text>
</comment>
<comment type="caution">
    <text evidence="7">Found in a segmental duplication on p arm of chromosome 16 giving rise to two identical copies of this gene sharing exons with SLX1A and SLX1B. The ORFs of SULT1A3 and SULT1A4 differ with only a single nucleotide change that does not alter the encoded amino acid. It is not possible to determine whether any individual polymorphism is present within SULT1A3 or SULT1A4 (PubMed:15358107).</text>
</comment>
<protein>
    <recommendedName>
        <fullName>Sulfotransferase 1A4</fullName>
        <shortName>ST1A4</shortName>
        <ecNumber evidence="1">2.8.2.1</ecNumber>
    </recommendedName>
    <alternativeName>
        <fullName>Aryl sulfotransferase 1A3/1A4</fullName>
    </alternativeName>
    <alternativeName>
        <fullName>Sulfotransferase 1A3/1A4</fullName>
    </alternativeName>
</protein>